<sequence>MRSSAKQEELVKAFKALLKEEKFSSQGEIVAALQEQGFDNINQSKVSRMLTKFGAVRTRNAKMEMVYCLPAELGVPTTSSPLKNLVLDIDYNDAVVVIHTSPGAAQLIARLLDSLGKAEGILGTIAGDDTIFTTPANGFTVKDLYEAILELFDQEL</sequence>
<dbReference type="EMBL" id="CU928145">
    <property type="protein sequence ID" value="CAU99905.1"/>
    <property type="molecule type" value="Genomic_DNA"/>
</dbReference>
<dbReference type="RefSeq" id="WP_001257846.1">
    <property type="nucleotide sequence ID" value="NC_011748.1"/>
</dbReference>
<dbReference type="SMR" id="B7LHT7"/>
<dbReference type="GeneID" id="93778748"/>
<dbReference type="KEGG" id="eck:EC55989_3650"/>
<dbReference type="HOGENOM" id="CLU_097103_2_0_6"/>
<dbReference type="UniPathway" id="UPA00068"/>
<dbReference type="Proteomes" id="UP000000746">
    <property type="component" value="Chromosome"/>
</dbReference>
<dbReference type="GO" id="GO:0005737">
    <property type="term" value="C:cytoplasm"/>
    <property type="evidence" value="ECO:0007669"/>
    <property type="project" value="UniProtKB-SubCell"/>
</dbReference>
<dbReference type="GO" id="GO:0034618">
    <property type="term" value="F:arginine binding"/>
    <property type="evidence" value="ECO:0007669"/>
    <property type="project" value="InterPro"/>
</dbReference>
<dbReference type="GO" id="GO:0003677">
    <property type="term" value="F:DNA binding"/>
    <property type="evidence" value="ECO:0007669"/>
    <property type="project" value="UniProtKB-KW"/>
</dbReference>
<dbReference type="GO" id="GO:0003700">
    <property type="term" value="F:DNA-binding transcription factor activity"/>
    <property type="evidence" value="ECO:0007669"/>
    <property type="project" value="UniProtKB-UniRule"/>
</dbReference>
<dbReference type="GO" id="GO:0006526">
    <property type="term" value="P:L-arginine biosynthetic process"/>
    <property type="evidence" value="ECO:0007669"/>
    <property type="project" value="UniProtKB-UniPathway"/>
</dbReference>
<dbReference type="GO" id="GO:0051259">
    <property type="term" value="P:protein complex oligomerization"/>
    <property type="evidence" value="ECO:0007669"/>
    <property type="project" value="InterPro"/>
</dbReference>
<dbReference type="GO" id="GO:1900079">
    <property type="term" value="P:regulation of arginine biosynthetic process"/>
    <property type="evidence" value="ECO:0007669"/>
    <property type="project" value="UniProtKB-UniRule"/>
</dbReference>
<dbReference type="FunFam" id="1.10.10.10:FF:000074">
    <property type="entry name" value="Arginine repressor"/>
    <property type="match status" value="1"/>
</dbReference>
<dbReference type="FunFam" id="3.30.1360.40:FF:000004">
    <property type="entry name" value="Arginine repressor"/>
    <property type="match status" value="1"/>
</dbReference>
<dbReference type="Gene3D" id="3.30.1360.40">
    <property type="match status" value="1"/>
</dbReference>
<dbReference type="Gene3D" id="1.10.10.10">
    <property type="entry name" value="Winged helix-like DNA-binding domain superfamily/Winged helix DNA-binding domain"/>
    <property type="match status" value="1"/>
</dbReference>
<dbReference type="HAMAP" id="MF_00173">
    <property type="entry name" value="Arg_repressor"/>
    <property type="match status" value="1"/>
</dbReference>
<dbReference type="InterPro" id="IPR001669">
    <property type="entry name" value="Arg_repress"/>
</dbReference>
<dbReference type="InterPro" id="IPR020899">
    <property type="entry name" value="Arg_repress_C"/>
</dbReference>
<dbReference type="InterPro" id="IPR036251">
    <property type="entry name" value="Arg_repress_C_sf"/>
</dbReference>
<dbReference type="InterPro" id="IPR020900">
    <property type="entry name" value="Arg_repress_DNA-bd"/>
</dbReference>
<dbReference type="InterPro" id="IPR036388">
    <property type="entry name" value="WH-like_DNA-bd_sf"/>
</dbReference>
<dbReference type="InterPro" id="IPR036390">
    <property type="entry name" value="WH_DNA-bd_sf"/>
</dbReference>
<dbReference type="NCBIfam" id="TIGR01529">
    <property type="entry name" value="argR_whole"/>
    <property type="match status" value="1"/>
</dbReference>
<dbReference type="NCBIfam" id="NF003457">
    <property type="entry name" value="PRK05066.1"/>
    <property type="match status" value="1"/>
</dbReference>
<dbReference type="PANTHER" id="PTHR34471">
    <property type="entry name" value="ARGININE REPRESSOR"/>
    <property type="match status" value="1"/>
</dbReference>
<dbReference type="PANTHER" id="PTHR34471:SF1">
    <property type="entry name" value="ARGININE REPRESSOR"/>
    <property type="match status" value="1"/>
</dbReference>
<dbReference type="Pfam" id="PF01316">
    <property type="entry name" value="Arg_repressor"/>
    <property type="match status" value="1"/>
</dbReference>
<dbReference type="Pfam" id="PF02863">
    <property type="entry name" value="Arg_repressor_C"/>
    <property type="match status" value="1"/>
</dbReference>
<dbReference type="PRINTS" id="PR01467">
    <property type="entry name" value="ARGREPRESSOR"/>
</dbReference>
<dbReference type="SUPFAM" id="SSF55252">
    <property type="entry name" value="C-terminal domain of arginine repressor"/>
    <property type="match status" value="1"/>
</dbReference>
<dbReference type="SUPFAM" id="SSF46785">
    <property type="entry name" value="Winged helix' DNA-binding domain"/>
    <property type="match status" value="1"/>
</dbReference>
<accession>B7LHT7</accession>
<name>ARGR_ECO55</name>
<comment type="function">
    <text evidence="1">Regulates arginine biosynthesis genes.</text>
</comment>
<comment type="pathway">
    <text>Amino-acid biosynthesis; L-arginine biosynthesis [regulation].</text>
</comment>
<comment type="subcellular location">
    <subcellularLocation>
        <location evidence="1">Cytoplasm</location>
    </subcellularLocation>
</comment>
<comment type="similarity">
    <text evidence="1">Belongs to the ArgR family.</text>
</comment>
<keyword id="KW-0028">Amino-acid biosynthesis</keyword>
<keyword id="KW-0055">Arginine biosynthesis</keyword>
<keyword id="KW-0963">Cytoplasm</keyword>
<keyword id="KW-0238">DNA-binding</keyword>
<keyword id="KW-1185">Reference proteome</keyword>
<keyword id="KW-0678">Repressor</keyword>
<keyword id="KW-0804">Transcription</keyword>
<keyword id="KW-0805">Transcription regulation</keyword>
<evidence type="ECO:0000255" key="1">
    <source>
        <dbReference type="HAMAP-Rule" id="MF_00173"/>
    </source>
</evidence>
<feature type="chain" id="PRO_1000123795" description="Arginine repressor">
    <location>
        <begin position="1"/>
        <end position="156"/>
    </location>
</feature>
<protein>
    <recommendedName>
        <fullName evidence="1">Arginine repressor</fullName>
    </recommendedName>
</protein>
<gene>
    <name evidence="1" type="primary">argR</name>
    <name type="ordered locus">EC55989_3650</name>
</gene>
<proteinExistence type="inferred from homology"/>
<reference key="1">
    <citation type="journal article" date="2009" name="PLoS Genet.">
        <title>Organised genome dynamics in the Escherichia coli species results in highly diverse adaptive paths.</title>
        <authorList>
            <person name="Touchon M."/>
            <person name="Hoede C."/>
            <person name="Tenaillon O."/>
            <person name="Barbe V."/>
            <person name="Baeriswyl S."/>
            <person name="Bidet P."/>
            <person name="Bingen E."/>
            <person name="Bonacorsi S."/>
            <person name="Bouchier C."/>
            <person name="Bouvet O."/>
            <person name="Calteau A."/>
            <person name="Chiapello H."/>
            <person name="Clermont O."/>
            <person name="Cruveiller S."/>
            <person name="Danchin A."/>
            <person name="Diard M."/>
            <person name="Dossat C."/>
            <person name="Karoui M.E."/>
            <person name="Frapy E."/>
            <person name="Garry L."/>
            <person name="Ghigo J.M."/>
            <person name="Gilles A.M."/>
            <person name="Johnson J."/>
            <person name="Le Bouguenec C."/>
            <person name="Lescat M."/>
            <person name="Mangenot S."/>
            <person name="Martinez-Jehanne V."/>
            <person name="Matic I."/>
            <person name="Nassif X."/>
            <person name="Oztas S."/>
            <person name="Petit M.A."/>
            <person name="Pichon C."/>
            <person name="Rouy Z."/>
            <person name="Ruf C.S."/>
            <person name="Schneider D."/>
            <person name="Tourret J."/>
            <person name="Vacherie B."/>
            <person name="Vallenet D."/>
            <person name="Medigue C."/>
            <person name="Rocha E.P.C."/>
            <person name="Denamur E."/>
        </authorList>
    </citation>
    <scope>NUCLEOTIDE SEQUENCE [LARGE SCALE GENOMIC DNA]</scope>
    <source>
        <strain>55989 / EAEC</strain>
    </source>
</reference>
<organism>
    <name type="scientific">Escherichia coli (strain 55989 / EAEC)</name>
    <dbReference type="NCBI Taxonomy" id="585055"/>
    <lineage>
        <taxon>Bacteria</taxon>
        <taxon>Pseudomonadati</taxon>
        <taxon>Pseudomonadota</taxon>
        <taxon>Gammaproteobacteria</taxon>
        <taxon>Enterobacterales</taxon>
        <taxon>Enterobacteriaceae</taxon>
        <taxon>Escherichia</taxon>
    </lineage>
</organism>